<gene>
    <name evidence="1" type="primary">gloB</name>
    <name type="ordered locus">XCV1087</name>
</gene>
<sequence length="255" mass="27914">MRLIALPAFDDNYIWALIAADGRAIIVDPGQAEPVLAAAQHQGLVPSAVLLTHHHGDHIGGVAELQQRWPDLELFGPADERIPADAHQVGHGERLRLLDVEFQVLQVPGHTRSHIAFVADGYLFSGDTLFSLGCGRMFEGTAPQMFDSLQRLASLPGETLVCCGHEYTLANAAFALHVDPTNAALQRRQQEAQAMRHAARPTLPISLKSELATNPFLRTGRPEIRAAVAPRAAGELSSEVDVFAELRRWKDEFRS</sequence>
<feature type="chain" id="PRO_1000068230" description="Hydroxyacylglutathione hydrolase">
    <location>
        <begin position="1"/>
        <end position="255"/>
    </location>
</feature>
<feature type="binding site" evidence="1">
    <location>
        <position position="53"/>
    </location>
    <ligand>
        <name>Zn(2+)</name>
        <dbReference type="ChEBI" id="CHEBI:29105"/>
        <label>1</label>
    </ligand>
</feature>
<feature type="binding site" evidence="1">
    <location>
        <position position="55"/>
    </location>
    <ligand>
        <name>Zn(2+)</name>
        <dbReference type="ChEBI" id="CHEBI:29105"/>
        <label>1</label>
    </ligand>
</feature>
<feature type="binding site" evidence="1">
    <location>
        <position position="57"/>
    </location>
    <ligand>
        <name>Zn(2+)</name>
        <dbReference type="ChEBI" id="CHEBI:29105"/>
        <label>2</label>
    </ligand>
</feature>
<feature type="binding site" evidence="1">
    <location>
        <position position="58"/>
    </location>
    <ligand>
        <name>Zn(2+)</name>
        <dbReference type="ChEBI" id="CHEBI:29105"/>
        <label>2</label>
    </ligand>
</feature>
<feature type="binding site" evidence="1">
    <location>
        <position position="110"/>
    </location>
    <ligand>
        <name>Zn(2+)</name>
        <dbReference type="ChEBI" id="CHEBI:29105"/>
        <label>1</label>
    </ligand>
</feature>
<feature type="binding site" evidence="1">
    <location>
        <position position="127"/>
    </location>
    <ligand>
        <name>Zn(2+)</name>
        <dbReference type="ChEBI" id="CHEBI:29105"/>
        <label>1</label>
    </ligand>
</feature>
<feature type="binding site" evidence="1">
    <location>
        <position position="127"/>
    </location>
    <ligand>
        <name>Zn(2+)</name>
        <dbReference type="ChEBI" id="CHEBI:29105"/>
        <label>2</label>
    </ligand>
</feature>
<feature type="binding site" evidence="1">
    <location>
        <position position="165"/>
    </location>
    <ligand>
        <name>Zn(2+)</name>
        <dbReference type="ChEBI" id="CHEBI:29105"/>
        <label>2</label>
    </ligand>
</feature>
<reference key="1">
    <citation type="journal article" date="2005" name="J. Bacteriol.">
        <title>Insights into genome plasticity and pathogenicity of the plant pathogenic Bacterium Xanthomonas campestris pv. vesicatoria revealed by the complete genome sequence.</title>
        <authorList>
            <person name="Thieme F."/>
            <person name="Koebnik R."/>
            <person name="Bekel T."/>
            <person name="Berger C."/>
            <person name="Boch J."/>
            <person name="Buettner D."/>
            <person name="Caldana C."/>
            <person name="Gaigalat L."/>
            <person name="Goesmann A."/>
            <person name="Kay S."/>
            <person name="Kirchner O."/>
            <person name="Lanz C."/>
            <person name="Linke B."/>
            <person name="McHardy A.C."/>
            <person name="Meyer F."/>
            <person name="Mittenhuber G."/>
            <person name="Nies D.H."/>
            <person name="Niesbach-Kloesgen U."/>
            <person name="Patschkowski T."/>
            <person name="Rueckert C."/>
            <person name="Rupp O."/>
            <person name="Schneiker S."/>
            <person name="Schuster S.C."/>
            <person name="Vorhoelter F.J."/>
            <person name="Weber E."/>
            <person name="Puehler A."/>
            <person name="Bonas U."/>
            <person name="Bartels D."/>
            <person name="Kaiser O."/>
        </authorList>
    </citation>
    <scope>NUCLEOTIDE SEQUENCE [LARGE SCALE GENOMIC DNA]</scope>
    <source>
        <strain>85-10</strain>
    </source>
</reference>
<keyword id="KW-0378">Hydrolase</keyword>
<keyword id="KW-0479">Metal-binding</keyword>
<keyword id="KW-0862">Zinc</keyword>
<comment type="function">
    <text evidence="1">Thiolesterase that catalyzes the hydrolysis of S-D-lactoyl-glutathione to form glutathione and D-lactic acid.</text>
</comment>
<comment type="catalytic activity">
    <reaction evidence="1">
        <text>an S-(2-hydroxyacyl)glutathione + H2O = a 2-hydroxy carboxylate + glutathione + H(+)</text>
        <dbReference type="Rhea" id="RHEA:21864"/>
        <dbReference type="ChEBI" id="CHEBI:15377"/>
        <dbReference type="ChEBI" id="CHEBI:15378"/>
        <dbReference type="ChEBI" id="CHEBI:57925"/>
        <dbReference type="ChEBI" id="CHEBI:58896"/>
        <dbReference type="ChEBI" id="CHEBI:71261"/>
        <dbReference type="EC" id="3.1.2.6"/>
    </reaction>
</comment>
<comment type="cofactor">
    <cofactor evidence="1">
        <name>Zn(2+)</name>
        <dbReference type="ChEBI" id="CHEBI:29105"/>
    </cofactor>
    <text evidence="1">Binds 2 Zn(2+) ions per subunit.</text>
</comment>
<comment type="pathway">
    <text evidence="1">Secondary metabolite metabolism; methylglyoxal degradation; (R)-lactate from methylglyoxal: step 2/2.</text>
</comment>
<comment type="subunit">
    <text evidence="1">Monomer.</text>
</comment>
<comment type="similarity">
    <text evidence="1">Belongs to the metallo-beta-lactamase superfamily. Glyoxalase II family.</text>
</comment>
<name>GLO2_XANE5</name>
<evidence type="ECO:0000255" key="1">
    <source>
        <dbReference type="HAMAP-Rule" id="MF_01374"/>
    </source>
</evidence>
<proteinExistence type="inferred from homology"/>
<protein>
    <recommendedName>
        <fullName evidence="1">Hydroxyacylglutathione hydrolase</fullName>
        <ecNumber evidence="1">3.1.2.6</ecNumber>
    </recommendedName>
    <alternativeName>
        <fullName evidence="1">Glyoxalase II</fullName>
        <shortName evidence="1">Glx II</shortName>
    </alternativeName>
</protein>
<accession>Q3BWP5</accession>
<dbReference type="EC" id="3.1.2.6" evidence="1"/>
<dbReference type="EMBL" id="AM039952">
    <property type="protein sequence ID" value="CAJ22718.1"/>
    <property type="molecule type" value="Genomic_DNA"/>
</dbReference>
<dbReference type="RefSeq" id="WP_011346589.1">
    <property type="nucleotide sequence ID" value="NZ_CP017190.1"/>
</dbReference>
<dbReference type="SMR" id="Q3BWP5"/>
<dbReference type="STRING" id="456327.BJD11_17255"/>
<dbReference type="KEGG" id="xcv:XCV1087"/>
<dbReference type="eggNOG" id="COG0491">
    <property type="taxonomic scope" value="Bacteria"/>
</dbReference>
<dbReference type="HOGENOM" id="CLU_030571_4_1_6"/>
<dbReference type="UniPathway" id="UPA00619">
    <property type="reaction ID" value="UER00676"/>
</dbReference>
<dbReference type="Proteomes" id="UP000007069">
    <property type="component" value="Chromosome"/>
</dbReference>
<dbReference type="GO" id="GO:0004416">
    <property type="term" value="F:hydroxyacylglutathione hydrolase activity"/>
    <property type="evidence" value="ECO:0007669"/>
    <property type="project" value="UniProtKB-UniRule"/>
</dbReference>
<dbReference type="GO" id="GO:0046872">
    <property type="term" value="F:metal ion binding"/>
    <property type="evidence" value="ECO:0007669"/>
    <property type="project" value="UniProtKB-KW"/>
</dbReference>
<dbReference type="GO" id="GO:0019243">
    <property type="term" value="P:methylglyoxal catabolic process to D-lactate via S-lactoyl-glutathione"/>
    <property type="evidence" value="ECO:0007669"/>
    <property type="project" value="InterPro"/>
</dbReference>
<dbReference type="CDD" id="cd07723">
    <property type="entry name" value="hydroxyacylglutathione_hydrolase_MBL-fold"/>
    <property type="match status" value="1"/>
</dbReference>
<dbReference type="Gene3D" id="3.60.15.10">
    <property type="entry name" value="Ribonuclease Z/Hydroxyacylglutathione hydrolase-like"/>
    <property type="match status" value="1"/>
</dbReference>
<dbReference type="HAMAP" id="MF_01374">
    <property type="entry name" value="Glyoxalase_2"/>
    <property type="match status" value="1"/>
</dbReference>
<dbReference type="InterPro" id="IPR035680">
    <property type="entry name" value="Clx_II_MBL"/>
</dbReference>
<dbReference type="InterPro" id="IPR050110">
    <property type="entry name" value="Glyoxalase_II_hydrolase"/>
</dbReference>
<dbReference type="InterPro" id="IPR032282">
    <property type="entry name" value="HAGH_C"/>
</dbReference>
<dbReference type="InterPro" id="IPR017782">
    <property type="entry name" value="Hydroxyacylglutathione_Hdrlase"/>
</dbReference>
<dbReference type="InterPro" id="IPR001279">
    <property type="entry name" value="Metallo-B-lactamas"/>
</dbReference>
<dbReference type="InterPro" id="IPR036866">
    <property type="entry name" value="RibonucZ/Hydroxyglut_hydro"/>
</dbReference>
<dbReference type="NCBIfam" id="TIGR03413">
    <property type="entry name" value="GSH_gloB"/>
    <property type="match status" value="1"/>
</dbReference>
<dbReference type="PANTHER" id="PTHR43705">
    <property type="entry name" value="HYDROXYACYLGLUTATHIONE HYDROLASE"/>
    <property type="match status" value="1"/>
</dbReference>
<dbReference type="PANTHER" id="PTHR43705:SF1">
    <property type="entry name" value="HYDROXYACYLGLUTATHIONE HYDROLASE GLOB"/>
    <property type="match status" value="1"/>
</dbReference>
<dbReference type="Pfam" id="PF16123">
    <property type="entry name" value="HAGH_C"/>
    <property type="match status" value="1"/>
</dbReference>
<dbReference type="Pfam" id="PF00753">
    <property type="entry name" value="Lactamase_B"/>
    <property type="match status" value="1"/>
</dbReference>
<dbReference type="PIRSF" id="PIRSF005457">
    <property type="entry name" value="Glx"/>
    <property type="match status" value="1"/>
</dbReference>
<dbReference type="SMART" id="SM00849">
    <property type="entry name" value="Lactamase_B"/>
    <property type="match status" value="1"/>
</dbReference>
<dbReference type="SUPFAM" id="SSF56281">
    <property type="entry name" value="Metallo-hydrolase/oxidoreductase"/>
    <property type="match status" value="1"/>
</dbReference>
<organism>
    <name type="scientific">Xanthomonas euvesicatoria pv. vesicatoria (strain 85-10)</name>
    <name type="common">Xanthomonas campestris pv. vesicatoria</name>
    <dbReference type="NCBI Taxonomy" id="316273"/>
    <lineage>
        <taxon>Bacteria</taxon>
        <taxon>Pseudomonadati</taxon>
        <taxon>Pseudomonadota</taxon>
        <taxon>Gammaproteobacteria</taxon>
        <taxon>Lysobacterales</taxon>
        <taxon>Lysobacteraceae</taxon>
        <taxon>Xanthomonas</taxon>
    </lineage>
</organism>